<feature type="chain" id="PRO_0000376591" description="Probable cell division protein WhiA">
    <location>
        <begin position="1"/>
        <end position="303"/>
    </location>
</feature>
<feature type="DNA-binding region" description="H-T-H motif" evidence="1">
    <location>
        <begin position="272"/>
        <end position="303"/>
    </location>
</feature>
<accession>A2RFM2</accession>
<protein>
    <recommendedName>
        <fullName evidence="1">Probable cell division protein WhiA</fullName>
    </recommendedName>
</protein>
<organism>
    <name type="scientific">Streptococcus pyogenes serotype M5 (strain Manfredo)</name>
    <dbReference type="NCBI Taxonomy" id="160491"/>
    <lineage>
        <taxon>Bacteria</taxon>
        <taxon>Bacillati</taxon>
        <taxon>Bacillota</taxon>
        <taxon>Bacilli</taxon>
        <taxon>Lactobacillales</taxon>
        <taxon>Streptococcaceae</taxon>
        <taxon>Streptococcus</taxon>
    </lineage>
</organism>
<comment type="function">
    <text evidence="1">Involved in cell division and chromosome segregation.</text>
</comment>
<comment type="similarity">
    <text evidence="1">Belongs to the WhiA family.</text>
</comment>
<sequence length="303" mass="33979">MSFTTKVKEELIHLSTGDNNELAAIIKLSGSLGLAHQSLHLSITTENAKIARYIYSFIEDAYVIVPEIRYHQKTNLRKNRVYTVYVEQGVETILADLKLADSFFGLETGIEPQVLSDDNAGRSYLKGAFLTAGSIRDPESGKYQLEIYSVYLDHAQDLAQLMQKFMLDAKTIEHKSGAVTYLQKAEDIMDFLIIIGAMSCKEDFEAIKLLREARNDINRANNAETANIAKTISASMKTINNIIKIMDTIGLESLPIELQQVAQLRVKHPDYSIQQVADALEFPITKSGVNHRLRKINKIADDL</sequence>
<keyword id="KW-0131">Cell cycle</keyword>
<keyword id="KW-0132">Cell division</keyword>
<keyword id="KW-0238">DNA-binding</keyword>
<gene>
    <name evidence="1" type="primary">whiA</name>
    <name type="ordered locus">SpyM51323</name>
</gene>
<proteinExistence type="inferred from homology"/>
<dbReference type="EMBL" id="AM295007">
    <property type="protein sequence ID" value="CAM30651.1"/>
    <property type="molecule type" value="Genomic_DNA"/>
</dbReference>
<dbReference type="RefSeq" id="WP_011017562.1">
    <property type="nucleotide sequence ID" value="NC_009332.1"/>
</dbReference>
<dbReference type="SMR" id="A2RFM2"/>
<dbReference type="KEGG" id="spf:SpyM51323"/>
<dbReference type="HOGENOM" id="CLU_053282_0_0_9"/>
<dbReference type="GO" id="GO:0003677">
    <property type="term" value="F:DNA binding"/>
    <property type="evidence" value="ECO:0007669"/>
    <property type="project" value="UniProtKB-UniRule"/>
</dbReference>
<dbReference type="GO" id="GO:0051301">
    <property type="term" value="P:cell division"/>
    <property type="evidence" value="ECO:0007669"/>
    <property type="project" value="UniProtKB-UniRule"/>
</dbReference>
<dbReference type="GO" id="GO:0043937">
    <property type="term" value="P:regulation of sporulation"/>
    <property type="evidence" value="ECO:0007669"/>
    <property type="project" value="InterPro"/>
</dbReference>
<dbReference type="Gene3D" id="3.10.28.10">
    <property type="entry name" value="Homing endonucleases"/>
    <property type="match status" value="1"/>
</dbReference>
<dbReference type="HAMAP" id="MF_01420">
    <property type="entry name" value="HTH_type_WhiA"/>
    <property type="match status" value="1"/>
</dbReference>
<dbReference type="InterPro" id="IPR027434">
    <property type="entry name" value="Homing_endonucl"/>
</dbReference>
<dbReference type="InterPro" id="IPR018478">
    <property type="entry name" value="Sporu_reg_WhiA_N_dom"/>
</dbReference>
<dbReference type="InterPro" id="IPR003802">
    <property type="entry name" value="Sporulation_regulator_WhiA"/>
</dbReference>
<dbReference type="InterPro" id="IPR023054">
    <property type="entry name" value="Sporulation_regulator_WhiA_C"/>
</dbReference>
<dbReference type="InterPro" id="IPR039518">
    <property type="entry name" value="WhiA_LAGLIDADG_dom"/>
</dbReference>
<dbReference type="NCBIfam" id="TIGR00647">
    <property type="entry name" value="DNA_bind_WhiA"/>
    <property type="match status" value="1"/>
</dbReference>
<dbReference type="PANTHER" id="PTHR37307">
    <property type="entry name" value="CELL DIVISION PROTEIN WHIA-RELATED"/>
    <property type="match status" value="1"/>
</dbReference>
<dbReference type="PANTHER" id="PTHR37307:SF1">
    <property type="entry name" value="CELL DIVISION PROTEIN WHIA-RELATED"/>
    <property type="match status" value="1"/>
</dbReference>
<dbReference type="Pfam" id="PF02650">
    <property type="entry name" value="HTH_WhiA"/>
    <property type="match status" value="1"/>
</dbReference>
<dbReference type="Pfam" id="PF14527">
    <property type="entry name" value="LAGLIDADG_WhiA"/>
    <property type="match status" value="1"/>
</dbReference>
<dbReference type="Pfam" id="PF10298">
    <property type="entry name" value="WhiA_N"/>
    <property type="match status" value="1"/>
</dbReference>
<dbReference type="SUPFAM" id="SSF55608">
    <property type="entry name" value="Homing endonucleases"/>
    <property type="match status" value="1"/>
</dbReference>
<evidence type="ECO:0000255" key="1">
    <source>
        <dbReference type="HAMAP-Rule" id="MF_01420"/>
    </source>
</evidence>
<name>WHIA_STRPG</name>
<reference key="1">
    <citation type="journal article" date="2007" name="J. Bacteriol.">
        <title>Complete genome of acute rheumatic fever-associated serotype M5 Streptococcus pyogenes strain Manfredo.</title>
        <authorList>
            <person name="Holden M.T.G."/>
            <person name="Scott A."/>
            <person name="Cherevach I."/>
            <person name="Chillingworth T."/>
            <person name="Churcher C."/>
            <person name="Cronin A."/>
            <person name="Dowd L."/>
            <person name="Feltwell T."/>
            <person name="Hamlin N."/>
            <person name="Holroyd S."/>
            <person name="Jagels K."/>
            <person name="Moule S."/>
            <person name="Mungall K."/>
            <person name="Quail M.A."/>
            <person name="Price C."/>
            <person name="Rabbinowitsch E."/>
            <person name="Sharp S."/>
            <person name="Skelton J."/>
            <person name="Whitehead S."/>
            <person name="Barrell B.G."/>
            <person name="Kehoe M."/>
            <person name="Parkhill J."/>
        </authorList>
    </citation>
    <scope>NUCLEOTIDE SEQUENCE [LARGE SCALE GENOMIC DNA]</scope>
    <source>
        <strain>Manfredo</strain>
    </source>
</reference>